<protein>
    <recommendedName>
        <fullName evidence="1">Peptide deformylase</fullName>
        <shortName evidence="1">PDF</shortName>
        <ecNumber evidence="1">3.5.1.88</ecNumber>
    </recommendedName>
    <alternativeName>
        <fullName evidence="1">Polypeptide deformylase</fullName>
    </alternativeName>
</protein>
<dbReference type="EC" id="3.5.1.88" evidence="1"/>
<dbReference type="EMBL" id="BX936398">
    <property type="protein sequence ID" value="CAH22903.1"/>
    <property type="molecule type" value="Genomic_DNA"/>
</dbReference>
<dbReference type="RefSeq" id="WP_002209021.1">
    <property type="nucleotide sequence ID" value="NZ_CP009712.1"/>
</dbReference>
<dbReference type="SMR" id="Q664V4"/>
<dbReference type="GeneID" id="57974362"/>
<dbReference type="KEGG" id="ypo:BZ17_2922"/>
<dbReference type="KEGG" id="yps:YPTB3665"/>
<dbReference type="PATRIC" id="fig|273123.14.peg.3063"/>
<dbReference type="Proteomes" id="UP000001011">
    <property type="component" value="Chromosome"/>
</dbReference>
<dbReference type="GO" id="GO:0046872">
    <property type="term" value="F:metal ion binding"/>
    <property type="evidence" value="ECO:0007669"/>
    <property type="project" value="UniProtKB-KW"/>
</dbReference>
<dbReference type="GO" id="GO:0042586">
    <property type="term" value="F:peptide deformylase activity"/>
    <property type="evidence" value="ECO:0007669"/>
    <property type="project" value="UniProtKB-UniRule"/>
</dbReference>
<dbReference type="GO" id="GO:0043686">
    <property type="term" value="P:co-translational protein modification"/>
    <property type="evidence" value="ECO:0007669"/>
    <property type="project" value="TreeGrafter"/>
</dbReference>
<dbReference type="GO" id="GO:0006412">
    <property type="term" value="P:translation"/>
    <property type="evidence" value="ECO:0007669"/>
    <property type="project" value="UniProtKB-UniRule"/>
</dbReference>
<dbReference type="CDD" id="cd00487">
    <property type="entry name" value="Pep_deformylase"/>
    <property type="match status" value="1"/>
</dbReference>
<dbReference type="FunFam" id="3.90.45.10:FF:000001">
    <property type="entry name" value="Peptide deformylase"/>
    <property type="match status" value="1"/>
</dbReference>
<dbReference type="Gene3D" id="3.90.45.10">
    <property type="entry name" value="Peptide deformylase"/>
    <property type="match status" value="1"/>
</dbReference>
<dbReference type="HAMAP" id="MF_00163">
    <property type="entry name" value="Pep_deformylase"/>
    <property type="match status" value="1"/>
</dbReference>
<dbReference type="InterPro" id="IPR023635">
    <property type="entry name" value="Peptide_deformylase"/>
</dbReference>
<dbReference type="InterPro" id="IPR036821">
    <property type="entry name" value="Peptide_deformylase_sf"/>
</dbReference>
<dbReference type="NCBIfam" id="TIGR00079">
    <property type="entry name" value="pept_deformyl"/>
    <property type="match status" value="1"/>
</dbReference>
<dbReference type="NCBIfam" id="NF001159">
    <property type="entry name" value="PRK00150.1-3"/>
    <property type="match status" value="1"/>
</dbReference>
<dbReference type="PANTHER" id="PTHR10458">
    <property type="entry name" value="PEPTIDE DEFORMYLASE"/>
    <property type="match status" value="1"/>
</dbReference>
<dbReference type="PANTHER" id="PTHR10458:SF21">
    <property type="entry name" value="PEPTIDE DEFORMYLASE"/>
    <property type="match status" value="1"/>
</dbReference>
<dbReference type="Pfam" id="PF01327">
    <property type="entry name" value="Pep_deformylase"/>
    <property type="match status" value="1"/>
</dbReference>
<dbReference type="PIRSF" id="PIRSF004749">
    <property type="entry name" value="Pep_def"/>
    <property type="match status" value="1"/>
</dbReference>
<dbReference type="PRINTS" id="PR01576">
    <property type="entry name" value="PDEFORMYLASE"/>
</dbReference>
<dbReference type="SUPFAM" id="SSF56420">
    <property type="entry name" value="Peptide deformylase"/>
    <property type="match status" value="1"/>
</dbReference>
<accession>Q664V4</accession>
<organism>
    <name type="scientific">Yersinia pseudotuberculosis serotype I (strain IP32953)</name>
    <dbReference type="NCBI Taxonomy" id="273123"/>
    <lineage>
        <taxon>Bacteria</taxon>
        <taxon>Pseudomonadati</taxon>
        <taxon>Pseudomonadota</taxon>
        <taxon>Gammaproteobacteria</taxon>
        <taxon>Enterobacterales</taxon>
        <taxon>Yersiniaceae</taxon>
        <taxon>Yersinia</taxon>
    </lineage>
</organism>
<evidence type="ECO:0000255" key="1">
    <source>
        <dbReference type="HAMAP-Rule" id="MF_00163"/>
    </source>
</evidence>
<comment type="function">
    <text evidence="1">Removes the formyl group from the N-terminal Met of newly synthesized proteins. Requires at least a dipeptide for an efficient rate of reaction. N-terminal L-methionine is a prerequisite for activity but the enzyme has broad specificity at other positions.</text>
</comment>
<comment type="catalytic activity">
    <reaction evidence="1">
        <text>N-terminal N-formyl-L-methionyl-[peptide] + H2O = N-terminal L-methionyl-[peptide] + formate</text>
        <dbReference type="Rhea" id="RHEA:24420"/>
        <dbReference type="Rhea" id="RHEA-COMP:10639"/>
        <dbReference type="Rhea" id="RHEA-COMP:10640"/>
        <dbReference type="ChEBI" id="CHEBI:15377"/>
        <dbReference type="ChEBI" id="CHEBI:15740"/>
        <dbReference type="ChEBI" id="CHEBI:49298"/>
        <dbReference type="ChEBI" id="CHEBI:64731"/>
        <dbReference type="EC" id="3.5.1.88"/>
    </reaction>
</comment>
<comment type="cofactor">
    <cofactor evidence="1">
        <name>Fe(2+)</name>
        <dbReference type="ChEBI" id="CHEBI:29033"/>
    </cofactor>
    <text evidence="1">Binds 1 Fe(2+) ion.</text>
</comment>
<comment type="similarity">
    <text evidence="1">Belongs to the polypeptide deformylase family.</text>
</comment>
<sequence length="170" mass="19391">MSVLQVLHYPDERLRKIAAPVKEVNGEIQRIVDDMFETMYAEEGIGLAATQVDVHQQIIVIDISENRDQRLVLINPELLEKSGETGIEEGCLSIPEQRALVPRAEKVKIRALDRDGKPFELETDGLLAICIQHEMDHLIGKLFVDYLSPLKRQRIRQKLEKMAKLNARAN</sequence>
<gene>
    <name evidence="1" type="primary">def</name>
    <name type="ordered locus">YPTB3665</name>
</gene>
<proteinExistence type="inferred from homology"/>
<keyword id="KW-0378">Hydrolase</keyword>
<keyword id="KW-0408">Iron</keyword>
<keyword id="KW-0479">Metal-binding</keyword>
<keyword id="KW-0648">Protein biosynthesis</keyword>
<name>DEF_YERPS</name>
<feature type="chain" id="PRO_0000301130" description="Peptide deformylase">
    <location>
        <begin position="1"/>
        <end position="170"/>
    </location>
</feature>
<feature type="active site" evidence="1">
    <location>
        <position position="134"/>
    </location>
</feature>
<feature type="binding site" evidence="1">
    <location>
        <position position="91"/>
    </location>
    <ligand>
        <name>Fe cation</name>
        <dbReference type="ChEBI" id="CHEBI:24875"/>
    </ligand>
</feature>
<feature type="binding site" evidence="1">
    <location>
        <position position="133"/>
    </location>
    <ligand>
        <name>Fe cation</name>
        <dbReference type="ChEBI" id="CHEBI:24875"/>
    </ligand>
</feature>
<feature type="binding site" evidence="1">
    <location>
        <position position="137"/>
    </location>
    <ligand>
        <name>Fe cation</name>
        <dbReference type="ChEBI" id="CHEBI:24875"/>
    </ligand>
</feature>
<reference key="1">
    <citation type="journal article" date="2004" name="Proc. Natl. Acad. Sci. U.S.A.">
        <title>Insights into the evolution of Yersinia pestis through whole-genome comparison with Yersinia pseudotuberculosis.</title>
        <authorList>
            <person name="Chain P.S.G."/>
            <person name="Carniel E."/>
            <person name="Larimer F.W."/>
            <person name="Lamerdin J."/>
            <person name="Stoutland P.O."/>
            <person name="Regala W.M."/>
            <person name="Georgescu A.M."/>
            <person name="Vergez L.M."/>
            <person name="Land M.L."/>
            <person name="Motin V.L."/>
            <person name="Brubaker R.R."/>
            <person name="Fowler J."/>
            <person name="Hinnebusch J."/>
            <person name="Marceau M."/>
            <person name="Medigue C."/>
            <person name="Simonet M."/>
            <person name="Chenal-Francisque V."/>
            <person name="Souza B."/>
            <person name="Dacheux D."/>
            <person name="Elliott J.M."/>
            <person name="Derbise A."/>
            <person name="Hauser L.J."/>
            <person name="Garcia E."/>
        </authorList>
    </citation>
    <scope>NUCLEOTIDE SEQUENCE [LARGE SCALE GENOMIC DNA]</scope>
    <source>
        <strain>IP32953</strain>
    </source>
</reference>